<gene>
    <name type="primary">PE_PGRS46</name>
    <name type="ordered locus">Rv2634c</name>
    <name type="ORF">MTCY441.04c</name>
</gene>
<name>PG46_MYCTU</name>
<accession>P9WIE7</accession>
<accession>L0TD44</accession>
<accession>P0A690</accession>
<accession>P71933</accession>
<feature type="chain" id="PRO_0000216171" description="Uncharacterized PE-PGRS family protein PE_PGRS46">
    <location>
        <begin position="1"/>
        <end position="778"/>
    </location>
</feature>
<feature type="domain" description="PE" evidence="1">
    <location>
        <begin position="1"/>
        <end position="92"/>
    </location>
</feature>
<feature type="region of interest" description="Disordered" evidence="2">
    <location>
        <begin position="125"/>
        <end position="163"/>
    </location>
</feature>
<feature type="region of interest" description="Disordered" evidence="2">
    <location>
        <begin position="372"/>
        <end position="510"/>
    </location>
</feature>
<feature type="region of interest" description="Disordered" evidence="2">
    <location>
        <begin position="718"/>
        <end position="778"/>
    </location>
</feature>
<feature type="compositionally biased region" description="Gly residues" evidence="2">
    <location>
        <begin position="402"/>
        <end position="429"/>
    </location>
</feature>
<feature type="compositionally biased region" description="Gly residues" evidence="2">
    <location>
        <begin position="436"/>
        <end position="510"/>
    </location>
</feature>
<feature type="compositionally biased region" description="Gly residues" evidence="2">
    <location>
        <begin position="718"/>
        <end position="763"/>
    </location>
</feature>
<keyword id="KW-1185">Reference proteome</keyword>
<evidence type="ECO:0000255" key="1"/>
<evidence type="ECO:0000256" key="2">
    <source>
        <dbReference type="SAM" id="MobiDB-lite"/>
    </source>
</evidence>
<evidence type="ECO:0000305" key="3"/>
<organism>
    <name type="scientific">Mycobacterium tuberculosis (strain ATCC 25618 / H37Rv)</name>
    <dbReference type="NCBI Taxonomy" id="83332"/>
    <lineage>
        <taxon>Bacteria</taxon>
        <taxon>Bacillati</taxon>
        <taxon>Actinomycetota</taxon>
        <taxon>Actinomycetes</taxon>
        <taxon>Mycobacteriales</taxon>
        <taxon>Mycobacteriaceae</taxon>
        <taxon>Mycobacterium</taxon>
        <taxon>Mycobacterium tuberculosis complex</taxon>
    </lineage>
</organism>
<reference key="1">
    <citation type="journal article" date="1998" name="Nature">
        <title>Deciphering the biology of Mycobacterium tuberculosis from the complete genome sequence.</title>
        <authorList>
            <person name="Cole S.T."/>
            <person name="Brosch R."/>
            <person name="Parkhill J."/>
            <person name="Garnier T."/>
            <person name="Churcher C.M."/>
            <person name="Harris D.E."/>
            <person name="Gordon S.V."/>
            <person name="Eiglmeier K."/>
            <person name="Gas S."/>
            <person name="Barry C.E. III"/>
            <person name="Tekaia F."/>
            <person name="Badcock K."/>
            <person name="Basham D."/>
            <person name="Brown D."/>
            <person name="Chillingworth T."/>
            <person name="Connor R."/>
            <person name="Davies R.M."/>
            <person name="Devlin K."/>
            <person name="Feltwell T."/>
            <person name="Gentles S."/>
            <person name="Hamlin N."/>
            <person name="Holroyd S."/>
            <person name="Hornsby T."/>
            <person name="Jagels K."/>
            <person name="Krogh A."/>
            <person name="McLean J."/>
            <person name="Moule S."/>
            <person name="Murphy L.D."/>
            <person name="Oliver S."/>
            <person name="Osborne J."/>
            <person name="Quail M.A."/>
            <person name="Rajandream M.A."/>
            <person name="Rogers J."/>
            <person name="Rutter S."/>
            <person name="Seeger K."/>
            <person name="Skelton S."/>
            <person name="Squares S."/>
            <person name="Squares R."/>
            <person name="Sulston J.E."/>
            <person name="Taylor K."/>
            <person name="Whitehead S."/>
            <person name="Barrell B.G."/>
        </authorList>
    </citation>
    <scope>NUCLEOTIDE SEQUENCE [LARGE SCALE GENOMIC DNA]</scope>
    <source>
        <strain>ATCC 25618 / H37Rv</strain>
    </source>
</reference>
<protein>
    <recommendedName>
        <fullName>Uncharacterized PE-PGRS family protein PE_PGRS46</fullName>
    </recommendedName>
</protein>
<dbReference type="EMBL" id="AL123456">
    <property type="protein sequence ID" value="CCP45432.1"/>
    <property type="molecule type" value="Genomic_DNA"/>
</dbReference>
<dbReference type="PIR" id="F70963">
    <property type="entry name" value="F70963"/>
</dbReference>
<dbReference type="RefSeq" id="WP_009938544.1">
    <property type="nucleotide sequence ID" value="NZ_KK339370.1"/>
</dbReference>
<dbReference type="RefSeq" id="YP_177896.1">
    <property type="nucleotide sequence ID" value="NC_000962.3"/>
</dbReference>
<dbReference type="STRING" id="83332.Rv2634c"/>
<dbReference type="PaxDb" id="83332-Rv2634c"/>
<dbReference type="GeneID" id="888573"/>
<dbReference type="KEGG" id="mtu:Rv2634c"/>
<dbReference type="KEGG" id="mtv:RVBD_2634c"/>
<dbReference type="PATRIC" id="fig|83332.111.peg.2939"/>
<dbReference type="TubercuList" id="Rv2634c"/>
<dbReference type="eggNOG" id="COG3391">
    <property type="taxonomic scope" value="Bacteria"/>
</dbReference>
<dbReference type="InParanoid" id="P9WIE7"/>
<dbReference type="Proteomes" id="UP000001584">
    <property type="component" value="Chromosome"/>
</dbReference>
<dbReference type="FunFam" id="1.10.287.850:FF:000001">
    <property type="entry name" value="PE_PGRS39"/>
    <property type="match status" value="1"/>
</dbReference>
<dbReference type="Gene3D" id="1.10.287.850">
    <property type="entry name" value="HP0062-like domain"/>
    <property type="match status" value="1"/>
</dbReference>
<dbReference type="InterPro" id="IPR000084">
    <property type="entry name" value="PE-PGRS_N"/>
</dbReference>
<dbReference type="InterPro" id="IPR048996">
    <property type="entry name" value="PGRS_rpt"/>
</dbReference>
<dbReference type="Pfam" id="PF00934">
    <property type="entry name" value="PE"/>
    <property type="match status" value="1"/>
</dbReference>
<dbReference type="Pfam" id="PF21526">
    <property type="entry name" value="PGRS"/>
    <property type="match status" value="1"/>
</dbReference>
<dbReference type="SUPFAM" id="SSF140459">
    <property type="entry name" value="PE/PPE dimer-like"/>
    <property type="match status" value="1"/>
</dbReference>
<comment type="similarity">
    <text evidence="3">Belongs to the mycobacterial PE family. PGRS subfamily.</text>
</comment>
<sequence>MSFVIAVPEALTMAASDLANIGSTINAANAAAALPTTGVVAAAADEVSAAVAALFGSYAQSYQAFGAQLSAFHAQFVQSLTNGARSYVVAEATSAAPLQDLLGVVNAPAQALLGRPLIGNGANGADGTGAPGGPGGLLLGNGGNGGSGAPGQPGGAGGDAGLIGNGGTGGKGGDGLVGSGAAGGVGGRGGWLLGNGGTGGAGGAAGATLVGGTGGVGGATGLIGSGGFGGAGGAAAGVGTTGGVGGSGGVGGVFGNGGFGGAGGLGAAGGVGGAASYFGTGGGGGVGGDGAPGGDGGAGPLLIGNGGVGGLGGAGAAGGNGGAGGMLLGDGGAGGQGGPAVAGVLGGMPGAGGNGGNANWFGSGGAGGQGGTGLAGTNGVNPGSIANPNTGANGTDNSGNGNQTGGNGGPGPAGGVGEAGGVGGQGGLGESLDGNDGTGGKGGAGGTAGTDGGAGGAGGAGGIGETDGSAGGVATGGEGGDGATGGVDGGVGGAGGKGGQGHNTGVGDAFGGDGGIGGDGNGALGAAGGNGGTGGAGGNGGRGGMLIGNGGAGGAGGTGGTGGGGAAGFAGGVGGAGGEGLTDGAGTAEGGTGGLGGLGGVGGTGGMGGSGGVGGNGGAAGSLIGLGGGGGAGGVGGTGGIGGIGGAGGNGGAGGAGTTTGGGATIGGGGGTGGVGGAGGTGGTGGAGGTTGGSGGAGGLIGWAGAAGGTGAGGTGGQGGLGGQGGNGGNGGTGATGGQGGDFALGGNGGAGGAGGSPGGSSGIQGNMGPPGTQGADG</sequence>
<proteinExistence type="inferred from homology"/>